<feature type="chain" id="PRO_1000062082" description="Protein SlyX">
    <location>
        <begin position="1"/>
        <end position="72"/>
    </location>
</feature>
<feature type="region of interest" description="Disordered" evidence="2">
    <location>
        <begin position="52"/>
        <end position="72"/>
    </location>
</feature>
<feature type="compositionally biased region" description="Polar residues" evidence="2">
    <location>
        <begin position="55"/>
        <end position="65"/>
    </location>
</feature>
<evidence type="ECO:0000255" key="1">
    <source>
        <dbReference type="HAMAP-Rule" id="MF_00715"/>
    </source>
</evidence>
<evidence type="ECO:0000256" key="2">
    <source>
        <dbReference type="SAM" id="MobiDB-lite"/>
    </source>
</evidence>
<sequence>MQDLSLETRLAELESRLAFQEITIEELNVTVTAHEMEMAKLRDHLRLLTEKLKASQPSNIASQAEETPPPHY</sequence>
<proteinExistence type="inferred from homology"/>
<dbReference type="EMBL" id="CP000800">
    <property type="protein sequence ID" value="ABV18146.1"/>
    <property type="molecule type" value="Genomic_DNA"/>
</dbReference>
<dbReference type="RefSeq" id="WP_001153619.1">
    <property type="nucleotide sequence ID" value="NC_009801.1"/>
</dbReference>
<dbReference type="SMR" id="A7ZSM3"/>
<dbReference type="KEGG" id="ecw:EcE24377A_3817"/>
<dbReference type="HOGENOM" id="CLU_180796_4_2_6"/>
<dbReference type="Proteomes" id="UP000001122">
    <property type="component" value="Chromosome"/>
</dbReference>
<dbReference type="Gene3D" id="1.20.5.300">
    <property type="match status" value="1"/>
</dbReference>
<dbReference type="HAMAP" id="MF_00715">
    <property type="entry name" value="SlyX"/>
    <property type="match status" value="1"/>
</dbReference>
<dbReference type="InterPro" id="IPR007236">
    <property type="entry name" value="SlyX"/>
</dbReference>
<dbReference type="NCBIfam" id="NF002750">
    <property type="entry name" value="PRK02793.1"/>
    <property type="match status" value="1"/>
</dbReference>
<dbReference type="PANTHER" id="PTHR36508">
    <property type="entry name" value="PROTEIN SLYX"/>
    <property type="match status" value="1"/>
</dbReference>
<dbReference type="PANTHER" id="PTHR36508:SF1">
    <property type="entry name" value="PROTEIN SLYX"/>
    <property type="match status" value="1"/>
</dbReference>
<dbReference type="Pfam" id="PF04102">
    <property type="entry name" value="SlyX"/>
    <property type="match status" value="1"/>
</dbReference>
<organism>
    <name type="scientific">Escherichia coli O139:H28 (strain E24377A / ETEC)</name>
    <dbReference type="NCBI Taxonomy" id="331111"/>
    <lineage>
        <taxon>Bacteria</taxon>
        <taxon>Pseudomonadati</taxon>
        <taxon>Pseudomonadota</taxon>
        <taxon>Gammaproteobacteria</taxon>
        <taxon>Enterobacterales</taxon>
        <taxon>Enterobacteriaceae</taxon>
        <taxon>Escherichia</taxon>
    </lineage>
</organism>
<accession>A7ZSM3</accession>
<gene>
    <name evidence="1" type="primary">slyX</name>
    <name type="ordered locus">EcE24377A_3817</name>
</gene>
<name>SLYX_ECO24</name>
<reference key="1">
    <citation type="journal article" date="2008" name="J. Bacteriol.">
        <title>The pangenome structure of Escherichia coli: comparative genomic analysis of E. coli commensal and pathogenic isolates.</title>
        <authorList>
            <person name="Rasko D.A."/>
            <person name="Rosovitz M.J."/>
            <person name="Myers G.S.A."/>
            <person name="Mongodin E.F."/>
            <person name="Fricke W.F."/>
            <person name="Gajer P."/>
            <person name="Crabtree J."/>
            <person name="Sebaihia M."/>
            <person name="Thomson N.R."/>
            <person name="Chaudhuri R."/>
            <person name="Henderson I.R."/>
            <person name="Sperandio V."/>
            <person name="Ravel J."/>
        </authorList>
    </citation>
    <scope>NUCLEOTIDE SEQUENCE [LARGE SCALE GENOMIC DNA]</scope>
    <source>
        <strain>E24377A / ETEC</strain>
    </source>
</reference>
<keyword id="KW-1185">Reference proteome</keyword>
<protein>
    <recommendedName>
        <fullName evidence="1">Protein SlyX</fullName>
    </recommendedName>
</protein>
<comment type="similarity">
    <text evidence="1">Belongs to the SlyX family.</text>
</comment>